<keyword id="KW-1003">Cell membrane</keyword>
<keyword id="KW-0449">Lipoprotein</keyword>
<keyword id="KW-0472">Membrane</keyword>
<keyword id="KW-0564">Palmitate</keyword>
<keyword id="KW-1185">Reference proteome</keyword>
<keyword id="KW-0732">Signal</keyword>
<keyword id="KW-0762">Sugar transport</keyword>
<keyword id="KW-0813">Transport</keyword>
<comment type="function">
    <text evidence="1">Part of the ABC transporter complex AraNPQ involved in the uptake of arabinooligosaccharides (By similarity). AraN captures the substrate and delivers it to the two transmembrane components (By similarity).</text>
</comment>
<comment type="subunit">
    <text evidence="1">The complex is composed of two ATP-binding proteins (MsmX), two transmembrane proteins (AraP and AraQ) and a solute-binding protein (AraN).</text>
</comment>
<comment type="subcellular location">
    <subcellularLocation>
        <location evidence="2">Cell membrane</location>
        <topology evidence="2">Lipid-anchor</topology>
    </subcellularLocation>
</comment>
<comment type="similarity">
    <text evidence="3">Belongs to the bacterial solute-binding protein 1 family.</text>
</comment>
<reference key="1">
    <citation type="journal article" date="2000" name="Nucleic Acids Res.">
        <title>Complete genome sequence of the alkaliphilic bacterium Bacillus halodurans and genomic sequence comparison with Bacillus subtilis.</title>
        <authorList>
            <person name="Takami H."/>
            <person name="Nakasone K."/>
            <person name="Takaki Y."/>
            <person name="Maeno G."/>
            <person name="Sasaki R."/>
            <person name="Masui N."/>
            <person name="Fuji F."/>
            <person name="Hirama C."/>
            <person name="Nakamura Y."/>
            <person name="Ogasawara N."/>
            <person name="Kuhara S."/>
            <person name="Horikoshi K."/>
        </authorList>
    </citation>
    <scope>NUCLEOTIDE SEQUENCE [LARGE SCALE GENOMIC DNA]</scope>
    <source>
        <strain>ATCC BAA-125 / DSM 18197 / FERM 7344 / JCM 9153 / C-125</strain>
    </source>
</reference>
<protein>
    <recommendedName>
        <fullName evidence="1">Arabinooligosaccharide-binding protein</fullName>
    </recommendedName>
</protein>
<name>ARAN_HALH5</name>
<proteinExistence type="inferred from homology"/>
<accession>Q9KEE7</accession>
<evidence type="ECO:0000250" key="1">
    <source>
        <dbReference type="UniProtKB" id="P94528"/>
    </source>
</evidence>
<evidence type="ECO:0000255" key="2">
    <source>
        <dbReference type="PROSITE-ProRule" id="PRU00303"/>
    </source>
</evidence>
<evidence type="ECO:0000305" key="3"/>
<dbReference type="EMBL" id="BA000004">
    <property type="protein sequence ID" value="BAB04624.1"/>
    <property type="molecule type" value="Genomic_DNA"/>
</dbReference>
<dbReference type="PIR" id="A83763">
    <property type="entry name" value="A83763"/>
</dbReference>
<dbReference type="RefSeq" id="WP_010897078.1">
    <property type="nucleotide sequence ID" value="NC_002570.2"/>
</dbReference>
<dbReference type="SMR" id="Q9KEE7"/>
<dbReference type="STRING" id="272558.gene:10726779"/>
<dbReference type="KEGG" id="bha:BH0905"/>
<dbReference type="eggNOG" id="COG1653">
    <property type="taxonomic scope" value="Bacteria"/>
</dbReference>
<dbReference type="HOGENOM" id="CLU_031285_2_4_9"/>
<dbReference type="OrthoDB" id="9768630at2"/>
<dbReference type="Proteomes" id="UP000001258">
    <property type="component" value="Chromosome"/>
</dbReference>
<dbReference type="GO" id="GO:0005886">
    <property type="term" value="C:plasma membrane"/>
    <property type="evidence" value="ECO:0007669"/>
    <property type="project" value="UniProtKB-SubCell"/>
</dbReference>
<dbReference type="Gene3D" id="3.40.190.10">
    <property type="entry name" value="Periplasmic binding protein-like II"/>
    <property type="match status" value="1"/>
</dbReference>
<dbReference type="InterPro" id="IPR050490">
    <property type="entry name" value="Bact_solute-bd_prot1"/>
</dbReference>
<dbReference type="InterPro" id="IPR006059">
    <property type="entry name" value="SBP"/>
</dbReference>
<dbReference type="PANTHER" id="PTHR43649">
    <property type="entry name" value="ARABINOSE-BINDING PROTEIN-RELATED"/>
    <property type="match status" value="1"/>
</dbReference>
<dbReference type="PANTHER" id="PTHR43649:SF33">
    <property type="entry name" value="POLYGALACTURONAN_RHAMNOGALACTURONAN-BINDING PROTEIN YTCQ"/>
    <property type="match status" value="1"/>
</dbReference>
<dbReference type="Pfam" id="PF01547">
    <property type="entry name" value="SBP_bac_1"/>
    <property type="match status" value="1"/>
</dbReference>
<dbReference type="SUPFAM" id="SSF53850">
    <property type="entry name" value="Periplasmic binding protein-like II"/>
    <property type="match status" value="1"/>
</dbReference>
<dbReference type="PROSITE" id="PS51257">
    <property type="entry name" value="PROKAR_LIPOPROTEIN"/>
    <property type="match status" value="1"/>
</dbReference>
<sequence length="445" mass="50220">MGKNILFFSFVGVMVLVLVACGGSSSSSSDADETSVIGDDIEGATELIFWTFAGQHVDLFEDAVVSWNEEFPDRPIKLVAETYPFDQMHNNLLLALQSGSGAPDLADIEVSRFPNFLQGVPQLLPMNDHVEPVIDKFVEARFNLYAKDGEYYGIPTHVGASVMYYNKEIMDEAGVDIESIETWDDYVEAGKQVVERTGKVMTTVPTDDYLPMFQMVSQRGSDFFDENGNLTLDTQENIEVLQFLYDLIYVHEIAELTPGGQPHAEEYYQYMNDGNVASMAMPIWYMGRFLDNMPDLAGKMLIQPLPAWEEGGFRSAGMGGTGTVVTNQTDHEELAKDFLAYAKISEKANEKLWTILGFDPPRWDVWDNPVFQEDNDFYQFFGENIFEVLLDVRDEINSINISQYTPSVANEFSTNIFNDVLRQQTHTPEEALKKAQETIEANMQQ</sequence>
<organism>
    <name type="scientific">Halalkalibacterium halodurans (strain ATCC BAA-125 / DSM 18197 / FERM 7344 / JCM 9153 / C-125)</name>
    <name type="common">Bacillus halodurans</name>
    <dbReference type="NCBI Taxonomy" id="272558"/>
    <lineage>
        <taxon>Bacteria</taxon>
        <taxon>Bacillati</taxon>
        <taxon>Bacillota</taxon>
        <taxon>Bacilli</taxon>
        <taxon>Bacillales</taxon>
        <taxon>Bacillaceae</taxon>
        <taxon>Halalkalibacterium (ex Joshi et al. 2022)</taxon>
    </lineage>
</organism>
<gene>
    <name type="primary">araN</name>
    <name type="ordered locus">BH0905</name>
</gene>
<feature type="signal peptide" evidence="2">
    <location>
        <begin position="1"/>
        <end position="20"/>
    </location>
</feature>
<feature type="chain" id="PRO_0000031688" description="Arabinooligosaccharide-binding protein">
    <location>
        <begin position="21"/>
        <end position="445"/>
    </location>
</feature>
<feature type="lipid moiety-binding region" description="N-palmitoyl cysteine" evidence="2">
    <location>
        <position position="21"/>
    </location>
</feature>
<feature type="lipid moiety-binding region" description="S-diacylglycerol cysteine" evidence="2">
    <location>
        <position position="21"/>
    </location>
</feature>